<gene>
    <name evidence="1" type="primary">groEL</name>
    <name evidence="1" type="synonym">groL</name>
    <name type="ordered locus">SMGWSS_192</name>
</gene>
<evidence type="ECO:0000255" key="1">
    <source>
        <dbReference type="HAMAP-Rule" id="MF_00600"/>
    </source>
</evidence>
<feature type="chain" id="PRO_1000082495" description="Chaperonin GroEL">
    <location>
        <begin position="1"/>
        <end position="543"/>
    </location>
</feature>
<feature type="binding site" evidence="1">
    <location>
        <begin position="29"/>
        <end position="32"/>
    </location>
    <ligand>
        <name>ATP</name>
        <dbReference type="ChEBI" id="CHEBI:30616"/>
    </ligand>
</feature>
<feature type="binding site" evidence="1">
    <location>
        <position position="50"/>
    </location>
    <ligand>
        <name>ATP</name>
        <dbReference type="ChEBI" id="CHEBI:30616"/>
    </ligand>
</feature>
<feature type="binding site" evidence="1">
    <location>
        <begin position="86"/>
        <end position="90"/>
    </location>
    <ligand>
        <name>ATP</name>
        <dbReference type="ChEBI" id="CHEBI:30616"/>
    </ligand>
</feature>
<feature type="binding site" evidence="1">
    <location>
        <position position="415"/>
    </location>
    <ligand>
        <name>ATP</name>
        <dbReference type="ChEBI" id="CHEBI:30616"/>
    </ligand>
</feature>
<feature type="binding site" evidence="1">
    <location>
        <position position="495"/>
    </location>
    <ligand>
        <name>ATP</name>
        <dbReference type="ChEBI" id="CHEBI:30616"/>
    </ligand>
</feature>
<organism>
    <name type="scientific">Karelsulcia muelleri (strain GWSS)</name>
    <name type="common">Sulcia muelleri</name>
    <dbReference type="NCBI Taxonomy" id="444179"/>
    <lineage>
        <taxon>Bacteria</taxon>
        <taxon>Pseudomonadati</taxon>
        <taxon>Bacteroidota</taxon>
        <taxon>Flavobacteriia</taxon>
        <taxon>Flavobacteriales</taxon>
        <taxon>Candidatus Karelsulcia</taxon>
    </lineage>
</organism>
<dbReference type="EC" id="5.6.1.7" evidence="1"/>
<dbReference type="EMBL" id="CP000770">
    <property type="protein sequence ID" value="ABS30591.1"/>
    <property type="molecule type" value="Genomic_DNA"/>
</dbReference>
<dbReference type="SMR" id="A8Z640"/>
<dbReference type="STRING" id="444179.SMGWSS_192"/>
<dbReference type="KEGG" id="smg:SMGWSS_192"/>
<dbReference type="HOGENOM" id="CLU_016503_3_0_10"/>
<dbReference type="Proteomes" id="UP000000781">
    <property type="component" value="Chromosome"/>
</dbReference>
<dbReference type="GO" id="GO:0005737">
    <property type="term" value="C:cytoplasm"/>
    <property type="evidence" value="ECO:0007669"/>
    <property type="project" value="UniProtKB-SubCell"/>
</dbReference>
<dbReference type="GO" id="GO:0005524">
    <property type="term" value="F:ATP binding"/>
    <property type="evidence" value="ECO:0007669"/>
    <property type="project" value="UniProtKB-UniRule"/>
</dbReference>
<dbReference type="GO" id="GO:0140662">
    <property type="term" value="F:ATP-dependent protein folding chaperone"/>
    <property type="evidence" value="ECO:0007669"/>
    <property type="project" value="InterPro"/>
</dbReference>
<dbReference type="GO" id="GO:0016853">
    <property type="term" value="F:isomerase activity"/>
    <property type="evidence" value="ECO:0007669"/>
    <property type="project" value="UniProtKB-KW"/>
</dbReference>
<dbReference type="GO" id="GO:0051082">
    <property type="term" value="F:unfolded protein binding"/>
    <property type="evidence" value="ECO:0007669"/>
    <property type="project" value="UniProtKB-UniRule"/>
</dbReference>
<dbReference type="GO" id="GO:0042026">
    <property type="term" value="P:protein refolding"/>
    <property type="evidence" value="ECO:0007669"/>
    <property type="project" value="UniProtKB-UniRule"/>
</dbReference>
<dbReference type="CDD" id="cd03344">
    <property type="entry name" value="GroEL"/>
    <property type="match status" value="1"/>
</dbReference>
<dbReference type="FunFam" id="1.10.560.10:FF:000001">
    <property type="entry name" value="60 kDa chaperonin"/>
    <property type="match status" value="1"/>
</dbReference>
<dbReference type="FunFam" id="3.50.7.10:FF:000001">
    <property type="entry name" value="60 kDa chaperonin"/>
    <property type="match status" value="1"/>
</dbReference>
<dbReference type="Gene3D" id="3.50.7.10">
    <property type="entry name" value="GroEL"/>
    <property type="match status" value="1"/>
</dbReference>
<dbReference type="Gene3D" id="1.10.560.10">
    <property type="entry name" value="GroEL-like equatorial domain"/>
    <property type="match status" value="1"/>
</dbReference>
<dbReference type="Gene3D" id="3.30.260.10">
    <property type="entry name" value="TCP-1-like chaperonin intermediate domain"/>
    <property type="match status" value="1"/>
</dbReference>
<dbReference type="HAMAP" id="MF_00600">
    <property type="entry name" value="CH60"/>
    <property type="match status" value="1"/>
</dbReference>
<dbReference type="InterPro" id="IPR018370">
    <property type="entry name" value="Chaperonin_Cpn60_CS"/>
</dbReference>
<dbReference type="InterPro" id="IPR001844">
    <property type="entry name" value="Cpn60/GroEL"/>
</dbReference>
<dbReference type="InterPro" id="IPR002423">
    <property type="entry name" value="Cpn60/GroEL/TCP-1"/>
</dbReference>
<dbReference type="InterPro" id="IPR027409">
    <property type="entry name" value="GroEL-like_apical_dom_sf"/>
</dbReference>
<dbReference type="InterPro" id="IPR027413">
    <property type="entry name" value="GROEL-like_equatorial_sf"/>
</dbReference>
<dbReference type="InterPro" id="IPR027410">
    <property type="entry name" value="TCP-1-like_intermed_sf"/>
</dbReference>
<dbReference type="NCBIfam" id="TIGR02348">
    <property type="entry name" value="GroEL"/>
    <property type="match status" value="1"/>
</dbReference>
<dbReference type="NCBIfam" id="NF000592">
    <property type="entry name" value="PRK00013.1"/>
    <property type="match status" value="1"/>
</dbReference>
<dbReference type="NCBIfam" id="NF009487">
    <property type="entry name" value="PRK12849.1"/>
    <property type="match status" value="1"/>
</dbReference>
<dbReference type="NCBIfam" id="NF009488">
    <property type="entry name" value="PRK12850.1"/>
    <property type="match status" value="1"/>
</dbReference>
<dbReference type="NCBIfam" id="NF009489">
    <property type="entry name" value="PRK12851.1"/>
    <property type="match status" value="1"/>
</dbReference>
<dbReference type="PANTHER" id="PTHR45633">
    <property type="entry name" value="60 KDA HEAT SHOCK PROTEIN, MITOCHONDRIAL"/>
    <property type="match status" value="1"/>
</dbReference>
<dbReference type="Pfam" id="PF00118">
    <property type="entry name" value="Cpn60_TCP1"/>
    <property type="match status" value="1"/>
</dbReference>
<dbReference type="PRINTS" id="PR00298">
    <property type="entry name" value="CHAPERONIN60"/>
</dbReference>
<dbReference type="SUPFAM" id="SSF52029">
    <property type="entry name" value="GroEL apical domain-like"/>
    <property type="match status" value="1"/>
</dbReference>
<dbReference type="SUPFAM" id="SSF48592">
    <property type="entry name" value="GroEL equatorial domain-like"/>
    <property type="match status" value="1"/>
</dbReference>
<dbReference type="SUPFAM" id="SSF54849">
    <property type="entry name" value="GroEL-intermediate domain like"/>
    <property type="match status" value="1"/>
</dbReference>
<dbReference type="PROSITE" id="PS00296">
    <property type="entry name" value="CHAPERONINS_CPN60"/>
    <property type="match status" value="1"/>
</dbReference>
<accession>A8Z640</accession>
<name>CH60_KARMG</name>
<protein>
    <recommendedName>
        <fullName evidence="1">Chaperonin GroEL</fullName>
        <ecNumber evidence="1">5.6.1.7</ecNumber>
    </recommendedName>
    <alternativeName>
        <fullName evidence="1">60 kDa chaperonin</fullName>
    </alternativeName>
    <alternativeName>
        <fullName evidence="1">Chaperonin-60</fullName>
        <shortName evidence="1">Cpn60</shortName>
    </alternativeName>
</protein>
<comment type="function">
    <text evidence="1">Together with its co-chaperonin GroES, plays an essential role in assisting protein folding. The GroEL-GroES system forms a nano-cage that allows encapsulation of the non-native substrate proteins and provides a physical environment optimized to promote and accelerate protein folding.</text>
</comment>
<comment type="catalytic activity">
    <reaction evidence="1">
        <text>ATP + H2O + a folded polypeptide = ADP + phosphate + an unfolded polypeptide.</text>
        <dbReference type="EC" id="5.6.1.7"/>
    </reaction>
</comment>
<comment type="subunit">
    <text evidence="1">Forms a cylinder of 14 subunits composed of two heptameric rings stacked back-to-back. Interacts with the co-chaperonin GroES.</text>
</comment>
<comment type="subcellular location">
    <subcellularLocation>
        <location evidence="1">Cytoplasm</location>
    </subcellularLocation>
</comment>
<comment type="similarity">
    <text evidence="1">Belongs to the chaperonin (HSP60) family.</text>
</comment>
<proteinExistence type="inferred from homology"/>
<reference key="1">
    <citation type="journal article" date="2007" name="Proc. Natl. Acad. Sci. U.S.A.">
        <title>Parallel genomic evolution and metabolic interdependence in an ancient symbiosis.</title>
        <authorList>
            <person name="McCutcheon J.P."/>
            <person name="Moran N.A."/>
        </authorList>
    </citation>
    <scope>NUCLEOTIDE SEQUENCE [LARGE SCALE GENOMIC DNA]</scope>
    <source>
        <strain>GWSS</strain>
    </source>
</reference>
<sequence>MAKNIQFDIEARDKLKKGVDALANAVKVTLGPKGRNVVLQKSFGGPQVTKDGVSVAKEIELEDPIENLGAQMVKEVASKTNDIAGDGTTTATVLAQAIVREGLKNVAAGANPMDLKRGIDKAVEAVVNDLKKQSREVGGSNEKIKQVASISANNDEAIGELISVAFDKVGKEGVITVEEAKGIETTVDVVEGMQFDRGYQSPYFVTNSDKMITEFDNPYILLSDKKISSMKDLLPILEPVAQSGKPLLIISEEVEGEALATLVVNKIRGALKVAAVKAPGFGDRRKAMLEDIAILTGGTVISEETGSKLEDTKLSFLGKAERVTIDKDNTTIVNGNGKKSDIESRVNQIKAQIEKTTSDYDKEKLQERLAKLAGGVAVLYVGAASEVEMKEKKDRVDDALHATRAAVEEGIVAGGGVALVRAIKSLNGLKVDNVDQDTGIKIVKRSLQEPLRQIVANAGEEGSVIVAKVAEGKNEFGYDAKLGEYKNMISEGIIDPTKVTRVALENAASVSGMLLTTECVITEIKKEEPAMPQMPNSGMGGMM</sequence>
<keyword id="KW-0067">ATP-binding</keyword>
<keyword id="KW-0143">Chaperone</keyword>
<keyword id="KW-0963">Cytoplasm</keyword>
<keyword id="KW-0413">Isomerase</keyword>
<keyword id="KW-0547">Nucleotide-binding</keyword>